<gene>
    <name evidence="1" type="primary">ispE</name>
    <name type="ordered locus">Teth514_0599</name>
</gene>
<protein>
    <recommendedName>
        <fullName evidence="1">4-diphosphocytidyl-2-C-methyl-D-erythritol kinase</fullName>
        <shortName evidence="1">CMK</shortName>
        <ecNumber evidence="1">2.7.1.148</ecNumber>
    </recommendedName>
    <alternativeName>
        <fullName evidence="1">4-(cytidine-5'-diphospho)-2-C-methyl-D-erythritol kinase</fullName>
    </alternativeName>
</protein>
<proteinExistence type="inferred from homology"/>
<accession>B0K474</accession>
<sequence>MKKIKVKAYAKINLSLDVLGKRKDGYHEISTVMQSIDLADILEFEKSEIVKVFCSGHRVPEGEDNLIVKVINFLKEKYQIEEGVLVRLDKKIPLAAGLAGGSADAAATIVALDKLWNLNMSADEKKEIALKVGADVPFCLEGGTKLAKGIGEIFEDLNVPHMNLLLVKPDIEIFTKKIYDKWDRLNFKSHHATCSVVQAIQEGNIYKIAENIKNDLELVTSRECEVINQIKEELLKKGALGCAMSGSGPTVYGIFDDLQKLIKAYKNLEGIYSFVFFSKTIDKGLELYE</sequence>
<organism>
    <name type="scientific">Thermoanaerobacter sp. (strain X514)</name>
    <dbReference type="NCBI Taxonomy" id="399726"/>
    <lineage>
        <taxon>Bacteria</taxon>
        <taxon>Bacillati</taxon>
        <taxon>Bacillota</taxon>
        <taxon>Clostridia</taxon>
        <taxon>Thermoanaerobacterales</taxon>
        <taxon>Thermoanaerobacteraceae</taxon>
        <taxon>Thermoanaerobacter</taxon>
    </lineage>
</organism>
<dbReference type="EC" id="2.7.1.148" evidence="1"/>
<dbReference type="EMBL" id="CP000923">
    <property type="protein sequence ID" value="ABY91907.1"/>
    <property type="molecule type" value="Genomic_DNA"/>
</dbReference>
<dbReference type="RefSeq" id="WP_009052129.1">
    <property type="nucleotide sequence ID" value="NC_010320.1"/>
</dbReference>
<dbReference type="SMR" id="B0K474"/>
<dbReference type="KEGG" id="tex:Teth514_0599"/>
<dbReference type="HOGENOM" id="CLU_053057_1_1_9"/>
<dbReference type="UniPathway" id="UPA00056">
    <property type="reaction ID" value="UER00094"/>
</dbReference>
<dbReference type="Proteomes" id="UP000002155">
    <property type="component" value="Chromosome"/>
</dbReference>
<dbReference type="GO" id="GO:0050515">
    <property type="term" value="F:4-(cytidine 5'-diphospho)-2-C-methyl-D-erythritol kinase activity"/>
    <property type="evidence" value="ECO:0007669"/>
    <property type="project" value="UniProtKB-UniRule"/>
</dbReference>
<dbReference type="GO" id="GO:0005524">
    <property type="term" value="F:ATP binding"/>
    <property type="evidence" value="ECO:0007669"/>
    <property type="project" value="UniProtKB-UniRule"/>
</dbReference>
<dbReference type="GO" id="GO:0019288">
    <property type="term" value="P:isopentenyl diphosphate biosynthetic process, methylerythritol 4-phosphate pathway"/>
    <property type="evidence" value="ECO:0007669"/>
    <property type="project" value="UniProtKB-UniRule"/>
</dbReference>
<dbReference type="GO" id="GO:0016114">
    <property type="term" value="P:terpenoid biosynthetic process"/>
    <property type="evidence" value="ECO:0007669"/>
    <property type="project" value="InterPro"/>
</dbReference>
<dbReference type="Gene3D" id="3.30.230.10">
    <property type="match status" value="1"/>
</dbReference>
<dbReference type="Gene3D" id="3.30.70.890">
    <property type="entry name" value="GHMP kinase, C-terminal domain"/>
    <property type="match status" value="1"/>
</dbReference>
<dbReference type="HAMAP" id="MF_00061">
    <property type="entry name" value="IspE"/>
    <property type="match status" value="1"/>
</dbReference>
<dbReference type="InterPro" id="IPR013750">
    <property type="entry name" value="GHMP_kinase_C_dom"/>
</dbReference>
<dbReference type="InterPro" id="IPR036554">
    <property type="entry name" value="GHMP_kinase_C_sf"/>
</dbReference>
<dbReference type="InterPro" id="IPR006204">
    <property type="entry name" value="GHMP_kinase_N_dom"/>
</dbReference>
<dbReference type="InterPro" id="IPR004424">
    <property type="entry name" value="IspE"/>
</dbReference>
<dbReference type="InterPro" id="IPR020568">
    <property type="entry name" value="Ribosomal_Su5_D2-typ_SF"/>
</dbReference>
<dbReference type="InterPro" id="IPR014721">
    <property type="entry name" value="Ribsml_uS5_D2-typ_fold_subgr"/>
</dbReference>
<dbReference type="NCBIfam" id="TIGR00154">
    <property type="entry name" value="ispE"/>
    <property type="match status" value="1"/>
</dbReference>
<dbReference type="NCBIfam" id="NF011202">
    <property type="entry name" value="PRK14608.1"/>
    <property type="match status" value="1"/>
</dbReference>
<dbReference type="PANTHER" id="PTHR43527">
    <property type="entry name" value="4-DIPHOSPHOCYTIDYL-2-C-METHYL-D-ERYTHRITOL KINASE, CHLOROPLASTIC"/>
    <property type="match status" value="1"/>
</dbReference>
<dbReference type="PANTHER" id="PTHR43527:SF2">
    <property type="entry name" value="4-DIPHOSPHOCYTIDYL-2-C-METHYL-D-ERYTHRITOL KINASE, CHLOROPLASTIC"/>
    <property type="match status" value="1"/>
</dbReference>
<dbReference type="Pfam" id="PF08544">
    <property type="entry name" value="GHMP_kinases_C"/>
    <property type="match status" value="1"/>
</dbReference>
<dbReference type="Pfam" id="PF00288">
    <property type="entry name" value="GHMP_kinases_N"/>
    <property type="match status" value="1"/>
</dbReference>
<dbReference type="PIRSF" id="PIRSF010376">
    <property type="entry name" value="IspE"/>
    <property type="match status" value="1"/>
</dbReference>
<dbReference type="SUPFAM" id="SSF55060">
    <property type="entry name" value="GHMP Kinase, C-terminal domain"/>
    <property type="match status" value="1"/>
</dbReference>
<dbReference type="SUPFAM" id="SSF54211">
    <property type="entry name" value="Ribosomal protein S5 domain 2-like"/>
    <property type="match status" value="1"/>
</dbReference>
<keyword id="KW-0067">ATP-binding</keyword>
<keyword id="KW-0414">Isoprene biosynthesis</keyword>
<keyword id="KW-0418">Kinase</keyword>
<keyword id="KW-0547">Nucleotide-binding</keyword>
<keyword id="KW-0808">Transferase</keyword>
<name>ISPE_THEPX</name>
<reference key="1">
    <citation type="submission" date="2008-01" db="EMBL/GenBank/DDBJ databases">
        <title>Complete sequence of Thermoanaerobacter sp. X514.</title>
        <authorList>
            <consortium name="US DOE Joint Genome Institute"/>
            <person name="Copeland A."/>
            <person name="Lucas S."/>
            <person name="Lapidus A."/>
            <person name="Barry K."/>
            <person name="Glavina del Rio T."/>
            <person name="Dalin E."/>
            <person name="Tice H."/>
            <person name="Pitluck S."/>
            <person name="Bruce D."/>
            <person name="Goodwin L."/>
            <person name="Saunders E."/>
            <person name="Brettin T."/>
            <person name="Detter J.C."/>
            <person name="Han C."/>
            <person name="Schmutz J."/>
            <person name="Larimer F."/>
            <person name="Land M."/>
            <person name="Hauser L."/>
            <person name="Kyrpides N."/>
            <person name="Kim E."/>
            <person name="Hemme C."/>
            <person name="Fields M.W."/>
            <person name="He Z."/>
            <person name="Zhou J."/>
            <person name="Richardson P."/>
        </authorList>
    </citation>
    <scope>NUCLEOTIDE SEQUENCE [LARGE SCALE GENOMIC DNA]</scope>
    <source>
        <strain>X514</strain>
    </source>
</reference>
<comment type="function">
    <text evidence="1">Catalyzes the phosphorylation of the position 2 hydroxy group of 4-diphosphocytidyl-2C-methyl-D-erythritol.</text>
</comment>
<comment type="catalytic activity">
    <reaction evidence="1">
        <text>4-CDP-2-C-methyl-D-erythritol + ATP = 4-CDP-2-C-methyl-D-erythritol 2-phosphate + ADP + H(+)</text>
        <dbReference type="Rhea" id="RHEA:18437"/>
        <dbReference type="ChEBI" id="CHEBI:15378"/>
        <dbReference type="ChEBI" id="CHEBI:30616"/>
        <dbReference type="ChEBI" id="CHEBI:57823"/>
        <dbReference type="ChEBI" id="CHEBI:57919"/>
        <dbReference type="ChEBI" id="CHEBI:456216"/>
        <dbReference type="EC" id="2.7.1.148"/>
    </reaction>
</comment>
<comment type="pathway">
    <text evidence="1">Isoprenoid biosynthesis; isopentenyl diphosphate biosynthesis via DXP pathway; isopentenyl diphosphate from 1-deoxy-D-xylulose 5-phosphate: step 3/6.</text>
</comment>
<comment type="similarity">
    <text evidence="1">Belongs to the GHMP kinase family. IspE subfamily.</text>
</comment>
<feature type="chain" id="PRO_1000202388" description="4-diphosphocytidyl-2-C-methyl-D-erythritol kinase">
    <location>
        <begin position="1"/>
        <end position="289"/>
    </location>
</feature>
<feature type="active site" evidence="1">
    <location>
        <position position="11"/>
    </location>
</feature>
<feature type="active site" evidence="1">
    <location>
        <position position="135"/>
    </location>
</feature>
<feature type="binding site" evidence="1">
    <location>
        <begin position="93"/>
        <end position="103"/>
    </location>
    <ligand>
        <name>ATP</name>
        <dbReference type="ChEBI" id="CHEBI:30616"/>
    </ligand>
</feature>
<evidence type="ECO:0000255" key="1">
    <source>
        <dbReference type="HAMAP-Rule" id="MF_00061"/>
    </source>
</evidence>